<gene>
    <name evidence="1" type="primary">glpK</name>
    <name type="ordered locus">DMR_27730</name>
</gene>
<dbReference type="EC" id="2.7.1.30" evidence="1"/>
<dbReference type="EMBL" id="AP010904">
    <property type="protein sequence ID" value="BAH76264.1"/>
    <property type="molecule type" value="Genomic_DNA"/>
</dbReference>
<dbReference type="RefSeq" id="WP_015861430.1">
    <property type="nucleotide sequence ID" value="NC_012796.1"/>
</dbReference>
<dbReference type="SMR" id="C4XGV9"/>
<dbReference type="STRING" id="573370.DMR_27730"/>
<dbReference type="KEGG" id="dma:DMR_27730"/>
<dbReference type="eggNOG" id="COG0554">
    <property type="taxonomic scope" value="Bacteria"/>
</dbReference>
<dbReference type="HOGENOM" id="CLU_009281_2_3_7"/>
<dbReference type="OrthoDB" id="9805576at2"/>
<dbReference type="UniPathway" id="UPA00618">
    <property type="reaction ID" value="UER00672"/>
</dbReference>
<dbReference type="Proteomes" id="UP000009071">
    <property type="component" value="Chromosome"/>
</dbReference>
<dbReference type="GO" id="GO:0005829">
    <property type="term" value="C:cytosol"/>
    <property type="evidence" value="ECO:0007669"/>
    <property type="project" value="TreeGrafter"/>
</dbReference>
<dbReference type="GO" id="GO:0005524">
    <property type="term" value="F:ATP binding"/>
    <property type="evidence" value="ECO:0007669"/>
    <property type="project" value="UniProtKB-UniRule"/>
</dbReference>
<dbReference type="GO" id="GO:0004370">
    <property type="term" value="F:glycerol kinase activity"/>
    <property type="evidence" value="ECO:0000250"/>
    <property type="project" value="UniProtKB"/>
</dbReference>
<dbReference type="GO" id="GO:0019563">
    <property type="term" value="P:glycerol catabolic process"/>
    <property type="evidence" value="ECO:0007669"/>
    <property type="project" value="UniProtKB-UniRule"/>
</dbReference>
<dbReference type="GO" id="GO:0006071">
    <property type="term" value="P:glycerol metabolic process"/>
    <property type="evidence" value="ECO:0000250"/>
    <property type="project" value="UniProtKB"/>
</dbReference>
<dbReference type="GO" id="GO:0006072">
    <property type="term" value="P:glycerol-3-phosphate metabolic process"/>
    <property type="evidence" value="ECO:0007669"/>
    <property type="project" value="InterPro"/>
</dbReference>
<dbReference type="CDD" id="cd07786">
    <property type="entry name" value="FGGY_EcGK_like"/>
    <property type="match status" value="1"/>
</dbReference>
<dbReference type="FunFam" id="3.30.420.40:FF:000007">
    <property type="entry name" value="Glycerol kinase"/>
    <property type="match status" value="1"/>
</dbReference>
<dbReference type="FunFam" id="3.30.420.40:FF:000008">
    <property type="entry name" value="Glycerol kinase"/>
    <property type="match status" value="1"/>
</dbReference>
<dbReference type="Gene3D" id="3.30.420.40">
    <property type="match status" value="2"/>
</dbReference>
<dbReference type="HAMAP" id="MF_00186">
    <property type="entry name" value="Glycerol_kin"/>
    <property type="match status" value="1"/>
</dbReference>
<dbReference type="InterPro" id="IPR043129">
    <property type="entry name" value="ATPase_NBD"/>
</dbReference>
<dbReference type="InterPro" id="IPR000577">
    <property type="entry name" value="Carb_kinase_FGGY"/>
</dbReference>
<dbReference type="InterPro" id="IPR018483">
    <property type="entry name" value="Carb_kinase_FGGY_CS"/>
</dbReference>
<dbReference type="InterPro" id="IPR018485">
    <property type="entry name" value="FGGY_C"/>
</dbReference>
<dbReference type="InterPro" id="IPR018484">
    <property type="entry name" value="FGGY_N"/>
</dbReference>
<dbReference type="InterPro" id="IPR005999">
    <property type="entry name" value="Glycerol_kin"/>
</dbReference>
<dbReference type="NCBIfam" id="TIGR01311">
    <property type="entry name" value="glycerol_kin"/>
    <property type="match status" value="1"/>
</dbReference>
<dbReference type="NCBIfam" id="NF000756">
    <property type="entry name" value="PRK00047.1"/>
    <property type="match status" value="1"/>
</dbReference>
<dbReference type="PANTHER" id="PTHR10196:SF69">
    <property type="entry name" value="GLYCEROL KINASE"/>
    <property type="match status" value="1"/>
</dbReference>
<dbReference type="PANTHER" id="PTHR10196">
    <property type="entry name" value="SUGAR KINASE"/>
    <property type="match status" value="1"/>
</dbReference>
<dbReference type="Pfam" id="PF02782">
    <property type="entry name" value="FGGY_C"/>
    <property type="match status" value="1"/>
</dbReference>
<dbReference type="Pfam" id="PF00370">
    <property type="entry name" value="FGGY_N"/>
    <property type="match status" value="1"/>
</dbReference>
<dbReference type="PIRSF" id="PIRSF000538">
    <property type="entry name" value="GlpK"/>
    <property type="match status" value="1"/>
</dbReference>
<dbReference type="SUPFAM" id="SSF53067">
    <property type="entry name" value="Actin-like ATPase domain"/>
    <property type="match status" value="2"/>
</dbReference>
<dbReference type="PROSITE" id="PS00933">
    <property type="entry name" value="FGGY_KINASES_1"/>
    <property type="match status" value="1"/>
</dbReference>
<dbReference type="PROSITE" id="PS00445">
    <property type="entry name" value="FGGY_KINASES_2"/>
    <property type="match status" value="1"/>
</dbReference>
<protein>
    <recommendedName>
        <fullName evidence="1">Glycerol kinase</fullName>
        <ecNumber evidence="1">2.7.1.30</ecNumber>
    </recommendedName>
    <alternativeName>
        <fullName evidence="1">ATP:glycerol 3-phosphotransferase</fullName>
    </alternativeName>
    <alternativeName>
        <fullName evidence="1">Glycerokinase</fullName>
        <shortName evidence="1">GK</shortName>
    </alternativeName>
</protein>
<evidence type="ECO:0000255" key="1">
    <source>
        <dbReference type="HAMAP-Rule" id="MF_00186"/>
    </source>
</evidence>
<accession>C4XGV9</accession>
<comment type="function">
    <text evidence="1">Key enzyme in the regulation of glycerol uptake and metabolism. Catalyzes the phosphorylation of glycerol to yield sn-glycerol 3-phosphate.</text>
</comment>
<comment type="catalytic activity">
    <reaction evidence="1">
        <text>glycerol + ATP = sn-glycerol 3-phosphate + ADP + H(+)</text>
        <dbReference type="Rhea" id="RHEA:21644"/>
        <dbReference type="ChEBI" id="CHEBI:15378"/>
        <dbReference type="ChEBI" id="CHEBI:17754"/>
        <dbReference type="ChEBI" id="CHEBI:30616"/>
        <dbReference type="ChEBI" id="CHEBI:57597"/>
        <dbReference type="ChEBI" id="CHEBI:456216"/>
        <dbReference type="EC" id="2.7.1.30"/>
    </reaction>
</comment>
<comment type="activity regulation">
    <text evidence="1">Inhibited by fructose 1,6-bisphosphate (FBP).</text>
</comment>
<comment type="pathway">
    <text evidence="1">Polyol metabolism; glycerol degradation via glycerol kinase pathway; sn-glycerol 3-phosphate from glycerol: step 1/1.</text>
</comment>
<comment type="similarity">
    <text evidence="1">Belongs to the FGGY kinase family.</text>
</comment>
<organism>
    <name type="scientific">Solidesulfovibrio magneticus (strain ATCC 700980 / DSM 13731 / RS-1)</name>
    <name type="common">Desulfovibrio magneticus</name>
    <dbReference type="NCBI Taxonomy" id="573370"/>
    <lineage>
        <taxon>Bacteria</taxon>
        <taxon>Pseudomonadati</taxon>
        <taxon>Thermodesulfobacteriota</taxon>
        <taxon>Desulfovibrionia</taxon>
        <taxon>Desulfovibrionales</taxon>
        <taxon>Desulfovibrionaceae</taxon>
        <taxon>Solidesulfovibrio</taxon>
    </lineage>
</organism>
<sequence>MANYILSLDQGTTSSRAILFTREGDIKQIAQKEFTQIYPQPGWVEHNANEIFDTQSYVMRECLQFAGVDASDVAAIGITNQRETTVVWDKKTGAPIHNAIVWQDRRTAGFCDELKAKGLADVIRQKTGLVIDAYFSGTKVRWILDNVPGAREKADKGELLFGTIDSWLIWNLTKGAVHVTDESNASRTLLFNINTGAWDDELLAIIGVPAAMLPRVSKSSEVVGEIHPEFLGKALPIAGNAGDQQAATYGNACLKEGMAKNTYGTGCFMLMNTGKAPRPSNNNLLTTMAWATPSGRYFALEGSVFIAGAVVQWLRDGLGIIQSAPEVEQLALSVPDNGGVFLVPAFAGLGAPHWDQYARGAMVGITRGATKAHIARAALESIALQTLDIMDCMQKDAGIKLDTLRADGGATRNNLLMQFQADVLGVPVERPMVTETTALGAAYLAGLAVGFWKSEEEIAAMWQLDRRFEPNMAQSDRDKLLHDWQRAVARSKAWIEA</sequence>
<keyword id="KW-0067">ATP-binding</keyword>
<keyword id="KW-0319">Glycerol metabolism</keyword>
<keyword id="KW-0418">Kinase</keyword>
<keyword id="KW-0547">Nucleotide-binding</keyword>
<keyword id="KW-0808">Transferase</keyword>
<feature type="chain" id="PRO_1000203950" description="Glycerol kinase">
    <location>
        <begin position="1"/>
        <end position="497"/>
    </location>
</feature>
<feature type="binding site" evidence="1">
    <location>
        <position position="12"/>
    </location>
    <ligand>
        <name>ADP</name>
        <dbReference type="ChEBI" id="CHEBI:456216"/>
    </ligand>
</feature>
<feature type="binding site" evidence="1">
    <location>
        <position position="12"/>
    </location>
    <ligand>
        <name>ATP</name>
        <dbReference type="ChEBI" id="CHEBI:30616"/>
    </ligand>
</feature>
<feature type="binding site" evidence="1">
    <location>
        <position position="12"/>
    </location>
    <ligand>
        <name>sn-glycerol 3-phosphate</name>
        <dbReference type="ChEBI" id="CHEBI:57597"/>
    </ligand>
</feature>
<feature type="binding site" evidence="1">
    <location>
        <position position="13"/>
    </location>
    <ligand>
        <name>ATP</name>
        <dbReference type="ChEBI" id="CHEBI:30616"/>
    </ligand>
</feature>
<feature type="binding site" evidence="1">
    <location>
        <position position="14"/>
    </location>
    <ligand>
        <name>ATP</name>
        <dbReference type="ChEBI" id="CHEBI:30616"/>
    </ligand>
</feature>
<feature type="binding site" evidence="1">
    <location>
        <position position="16"/>
    </location>
    <ligand>
        <name>ADP</name>
        <dbReference type="ChEBI" id="CHEBI:456216"/>
    </ligand>
</feature>
<feature type="binding site" evidence="1">
    <location>
        <position position="82"/>
    </location>
    <ligand>
        <name>glycerol</name>
        <dbReference type="ChEBI" id="CHEBI:17754"/>
    </ligand>
</feature>
<feature type="binding site" evidence="1">
    <location>
        <position position="82"/>
    </location>
    <ligand>
        <name>sn-glycerol 3-phosphate</name>
        <dbReference type="ChEBI" id="CHEBI:57597"/>
    </ligand>
</feature>
<feature type="binding site" evidence="1">
    <location>
        <position position="83"/>
    </location>
    <ligand>
        <name>glycerol</name>
        <dbReference type="ChEBI" id="CHEBI:17754"/>
    </ligand>
</feature>
<feature type="binding site" evidence="1">
    <location>
        <position position="83"/>
    </location>
    <ligand>
        <name>sn-glycerol 3-phosphate</name>
        <dbReference type="ChEBI" id="CHEBI:57597"/>
    </ligand>
</feature>
<feature type="binding site" evidence="1">
    <location>
        <position position="134"/>
    </location>
    <ligand>
        <name>glycerol</name>
        <dbReference type="ChEBI" id="CHEBI:17754"/>
    </ligand>
</feature>
<feature type="binding site" evidence="1">
    <location>
        <position position="134"/>
    </location>
    <ligand>
        <name>sn-glycerol 3-phosphate</name>
        <dbReference type="ChEBI" id="CHEBI:57597"/>
    </ligand>
</feature>
<feature type="binding site" evidence="1">
    <location>
        <position position="243"/>
    </location>
    <ligand>
        <name>glycerol</name>
        <dbReference type="ChEBI" id="CHEBI:17754"/>
    </ligand>
</feature>
<feature type="binding site" evidence="1">
    <location>
        <position position="243"/>
    </location>
    <ligand>
        <name>sn-glycerol 3-phosphate</name>
        <dbReference type="ChEBI" id="CHEBI:57597"/>
    </ligand>
</feature>
<feature type="binding site" evidence="1">
    <location>
        <position position="244"/>
    </location>
    <ligand>
        <name>glycerol</name>
        <dbReference type="ChEBI" id="CHEBI:17754"/>
    </ligand>
</feature>
<feature type="binding site" evidence="1">
    <location>
        <position position="265"/>
    </location>
    <ligand>
        <name>ADP</name>
        <dbReference type="ChEBI" id="CHEBI:456216"/>
    </ligand>
</feature>
<feature type="binding site" evidence="1">
    <location>
        <position position="265"/>
    </location>
    <ligand>
        <name>ATP</name>
        <dbReference type="ChEBI" id="CHEBI:30616"/>
    </ligand>
</feature>
<feature type="binding site" evidence="1">
    <location>
        <position position="308"/>
    </location>
    <ligand>
        <name>ADP</name>
        <dbReference type="ChEBI" id="CHEBI:456216"/>
    </ligand>
</feature>
<feature type="binding site" evidence="1">
    <location>
        <position position="308"/>
    </location>
    <ligand>
        <name>ATP</name>
        <dbReference type="ChEBI" id="CHEBI:30616"/>
    </ligand>
</feature>
<feature type="binding site" evidence="1">
    <location>
        <position position="312"/>
    </location>
    <ligand>
        <name>ATP</name>
        <dbReference type="ChEBI" id="CHEBI:30616"/>
    </ligand>
</feature>
<feature type="binding site" evidence="1">
    <location>
        <position position="409"/>
    </location>
    <ligand>
        <name>ADP</name>
        <dbReference type="ChEBI" id="CHEBI:456216"/>
    </ligand>
</feature>
<feature type="binding site" evidence="1">
    <location>
        <position position="409"/>
    </location>
    <ligand>
        <name>ATP</name>
        <dbReference type="ChEBI" id="CHEBI:30616"/>
    </ligand>
</feature>
<feature type="binding site" evidence="1">
    <location>
        <position position="413"/>
    </location>
    <ligand>
        <name>ADP</name>
        <dbReference type="ChEBI" id="CHEBI:456216"/>
    </ligand>
</feature>
<reference key="1">
    <citation type="journal article" date="2009" name="Genome Res.">
        <title>Whole genome sequence of Desulfovibrio magneticus strain RS-1 revealed common gene clusters in magnetotactic bacteria.</title>
        <authorList>
            <person name="Nakazawa H."/>
            <person name="Arakaki A."/>
            <person name="Narita-Yamada S."/>
            <person name="Yashiro I."/>
            <person name="Jinno K."/>
            <person name="Aoki N."/>
            <person name="Tsuruyama A."/>
            <person name="Okamura Y."/>
            <person name="Tanikawa S."/>
            <person name="Fujita N."/>
            <person name="Takeyama H."/>
            <person name="Matsunaga T."/>
        </authorList>
    </citation>
    <scope>NUCLEOTIDE SEQUENCE [LARGE SCALE GENOMIC DNA]</scope>
    <source>
        <strain>ATCC 700980 / DSM 13731 / RS-1</strain>
    </source>
</reference>
<proteinExistence type="inferred from homology"/>
<name>GLPK_SOLM1</name>